<protein>
    <recommendedName>
        <fullName evidence="1">Ureidoglycolate lyase</fullName>
        <ecNumber evidence="1">4.3.2.3</ecNumber>
    </recommendedName>
    <alternativeName>
        <fullName evidence="1">Ureidoglycolatase</fullName>
    </alternativeName>
</protein>
<gene>
    <name evidence="1" type="primary">allA</name>
    <name type="ordered locus">BMEA_A0543</name>
</gene>
<proteinExistence type="inferred from homology"/>
<dbReference type="EC" id="4.3.2.3" evidence="1"/>
<dbReference type="EMBL" id="CP001488">
    <property type="protein sequence ID" value="ACO00321.1"/>
    <property type="molecule type" value="Genomic_DNA"/>
</dbReference>
<dbReference type="RefSeq" id="WP_004683193.1">
    <property type="nucleotide sequence ID" value="NC_012441.1"/>
</dbReference>
<dbReference type="SMR" id="C0RHL3"/>
<dbReference type="KEGG" id="bmi:BMEA_A0543"/>
<dbReference type="HOGENOM" id="CLU_070848_1_0_5"/>
<dbReference type="UniPathway" id="UPA00395"/>
<dbReference type="Proteomes" id="UP000001748">
    <property type="component" value="Chromosome I"/>
</dbReference>
<dbReference type="GO" id="GO:0004848">
    <property type="term" value="F:ureidoglycolate hydrolase activity"/>
    <property type="evidence" value="ECO:0007669"/>
    <property type="project" value="InterPro"/>
</dbReference>
<dbReference type="GO" id="GO:0050385">
    <property type="term" value="F:ureidoglycolate lyase activity"/>
    <property type="evidence" value="ECO:0007669"/>
    <property type="project" value="UniProtKB-UniRule"/>
</dbReference>
<dbReference type="GO" id="GO:0000256">
    <property type="term" value="P:allantoin catabolic process"/>
    <property type="evidence" value="ECO:0007669"/>
    <property type="project" value="UniProtKB-UniRule"/>
</dbReference>
<dbReference type="GO" id="GO:0006145">
    <property type="term" value="P:purine nucleobase catabolic process"/>
    <property type="evidence" value="ECO:0007669"/>
    <property type="project" value="UniProtKB-UniRule"/>
</dbReference>
<dbReference type="CDD" id="cd20298">
    <property type="entry name" value="cupin_UAH"/>
    <property type="match status" value="1"/>
</dbReference>
<dbReference type="Gene3D" id="2.60.120.480">
    <property type="entry name" value="Ureidoglycolate hydrolase"/>
    <property type="match status" value="1"/>
</dbReference>
<dbReference type="HAMAP" id="MF_00616">
    <property type="entry name" value="Ureidogly_lyase"/>
    <property type="match status" value="1"/>
</dbReference>
<dbReference type="InterPro" id="IPR011051">
    <property type="entry name" value="RmlC_Cupin_sf"/>
</dbReference>
<dbReference type="InterPro" id="IPR047233">
    <property type="entry name" value="UAH_cupin"/>
</dbReference>
<dbReference type="InterPro" id="IPR007247">
    <property type="entry name" value="Ureidogly_lyase"/>
</dbReference>
<dbReference type="InterPro" id="IPR023525">
    <property type="entry name" value="Ureidogly_lyase_bac"/>
</dbReference>
<dbReference type="InterPro" id="IPR024060">
    <property type="entry name" value="Ureidoglycolate_lyase_dom_sf"/>
</dbReference>
<dbReference type="NCBIfam" id="NF002953">
    <property type="entry name" value="PRK03606.2-4"/>
    <property type="match status" value="1"/>
</dbReference>
<dbReference type="NCBIfam" id="NF009932">
    <property type="entry name" value="PRK13395.1"/>
    <property type="match status" value="1"/>
</dbReference>
<dbReference type="PANTHER" id="PTHR21221">
    <property type="entry name" value="UREIDOGLYCOLATE HYDROLASE"/>
    <property type="match status" value="1"/>
</dbReference>
<dbReference type="PANTHER" id="PTHR21221:SF1">
    <property type="entry name" value="UREIDOGLYCOLATE LYASE"/>
    <property type="match status" value="1"/>
</dbReference>
<dbReference type="Pfam" id="PF04115">
    <property type="entry name" value="Ureidogly_lyase"/>
    <property type="match status" value="1"/>
</dbReference>
<dbReference type="PIRSF" id="PIRSF017306">
    <property type="entry name" value="Ureidogly_hydro"/>
    <property type="match status" value="1"/>
</dbReference>
<dbReference type="SUPFAM" id="SSF51182">
    <property type="entry name" value="RmlC-like cupins"/>
    <property type="match status" value="1"/>
</dbReference>
<sequence>MQIETLTVEPLTKEAFAPFGDVIEVEGAQLRLINNGTTERYHDLARVEAAGTQTRALINIFRGQSFAAPIDIMMMERHPFGSQAFIPLNGRPFLVVVAEDAGAGPARPRAFLARGDQGVNYLRNIWHHPLLALEQKSDFLVVDRAGREDNLEEYFFSDYAYRIETTQTA</sequence>
<keyword id="KW-0456">Lyase</keyword>
<keyword id="KW-0659">Purine metabolism</keyword>
<comment type="function">
    <text evidence="1">Catalyzes the catabolism of the allantoin degradation intermediate (S)-ureidoglycolate, generating urea and glyoxylate. Involved in the utilization of allantoin as nitrogen source.</text>
</comment>
<comment type="catalytic activity">
    <reaction evidence="1">
        <text>(S)-ureidoglycolate = urea + glyoxylate</text>
        <dbReference type="Rhea" id="RHEA:11304"/>
        <dbReference type="ChEBI" id="CHEBI:16199"/>
        <dbReference type="ChEBI" id="CHEBI:36655"/>
        <dbReference type="ChEBI" id="CHEBI:57296"/>
        <dbReference type="EC" id="4.3.2.3"/>
    </reaction>
</comment>
<comment type="cofactor">
    <cofactor evidence="1">
        <name>Ni(2+)</name>
        <dbReference type="ChEBI" id="CHEBI:49786"/>
    </cofactor>
</comment>
<comment type="pathway">
    <text evidence="1">Nitrogen metabolism; (S)-allantoin degradation.</text>
</comment>
<comment type="subunit">
    <text evidence="1">Homodimer.</text>
</comment>
<comment type="similarity">
    <text evidence="1">Belongs to the ureidoglycolate lyase family.</text>
</comment>
<evidence type="ECO:0000255" key="1">
    <source>
        <dbReference type="HAMAP-Rule" id="MF_00616"/>
    </source>
</evidence>
<accession>C0RHL3</accession>
<reference key="1">
    <citation type="submission" date="2009-03" db="EMBL/GenBank/DDBJ databases">
        <title>Brucella melitensis ATCC 23457 whole genome shotgun sequencing project.</title>
        <authorList>
            <person name="Setubal J.C."/>
            <person name="Boyle S."/>
            <person name="Crasta O.R."/>
            <person name="Gillespie J.J."/>
            <person name="Kenyon R.W."/>
            <person name="Lu J."/>
            <person name="Mane S."/>
            <person name="Nagrani S."/>
            <person name="Shallom J.M."/>
            <person name="Shallom S."/>
            <person name="Shukla M."/>
            <person name="Snyder E.E."/>
            <person name="Sobral B.W."/>
            <person name="Wattam A.R."/>
            <person name="Will R."/>
            <person name="Williams K."/>
            <person name="Yoo H."/>
            <person name="Munk C."/>
            <person name="Tapia R."/>
            <person name="Han C."/>
            <person name="Detter J.C."/>
            <person name="Bruce D."/>
            <person name="Brettin T.S."/>
        </authorList>
    </citation>
    <scope>NUCLEOTIDE SEQUENCE [LARGE SCALE GENOMIC DNA]</scope>
    <source>
        <strain>ATCC 23457</strain>
    </source>
</reference>
<organism>
    <name type="scientific">Brucella melitensis biotype 2 (strain ATCC 23457)</name>
    <dbReference type="NCBI Taxonomy" id="546272"/>
    <lineage>
        <taxon>Bacteria</taxon>
        <taxon>Pseudomonadati</taxon>
        <taxon>Pseudomonadota</taxon>
        <taxon>Alphaproteobacteria</taxon>
        <taxon>Hyphomicrobiales</taxon>
        <taxon>Brucellaceae</taxon>
        <taxon>Brucella/Ochrobactrum group</taxon>
        <taxon>Brucella</taxon>
    </lineage>
</organism>
<feature type="chain" id="PRO_1000147184" description="Ureidoglycolate lyase">
    <location>
        <begin position="1"/>
        <end position="169"/>
    </location>
</feature>
<name>ALLA_BRUMB</name>